<reference key="1">
    <citation type="journal article" date="2005" name="J. Bacteriol.">
        <title>Whole-genome sequence analysis of Pseudomonas syringae pv. phaseolicola 1448A reveals divergence among pathovars in genes involved in virulence and transposition.</title>
        <authorList>
            <person name="Joardar V."/>
            <person name="Lindeberg M."/>
            <person name="Jackson R.W."/>
            <person name="Selengut J."/>
            <person name="Dodson R."/>
            <person name="Brinkac L.M."/>
            <person name="Daugherty S.C."/>
            <person name="DeBoy R.T."/>
            <person name="Durkin A.S."/>
            <person name="Gwinn Giglio M."/>
            <person name="Madupu R."/>
            <person name="Nelson W.C."/>
            <person name="Rosovitz M.J."/>
            <person name="Sullivan S.A."/>
            <person name="Crabtree J."/>
            <person name="Creasy T."/>
            <person name="Davidsen T.M."/>
            <person name="Haft D.H."/>
            <person name="Zafar N."/>
            <person name="Zhou L."/>
            <person name="Halpin R."/>
            <person name="Holley T."/>
            <person name="Khouri H.M."/>
            <person name="Feldblyum T.V."/>
            <person name="White O."/>
            <person name="Fraser C.M."/>
            <person name="Chatterjee A.K."/>
            <person name="Cartinhour S."/>
            <person name="Schneider D."/>
            <person name="Mansfield J.W."/>
            <person name="Collmer A."/>
            <person name="Buell R."/>
        </authorList>
    </citation>
    <scope>NUCLEOTIDE SEQUENCE [LARGE SCALE GENOMIC DNA]</scope>
    <source>
        <strain>1448A / Race 6</strain>
    </source>
</reference>
<sequence length="1031" mass="116205">MTSEYAELHCLSNFSFQRGASSARELFERASRHGYQALAITDECTLAGIVRAWQASISTGLPLIIGSEMHIENGPKAVLLVESQTGYEALCKLITVARRRARKGEYRLLREDFEPSSDGLLAIWLPDIEGDAQACLAHGRWLRERFAERLWLGVELHRGADDEQRLADLLALAQSLGIPAVASGDVHMHARGRRALQDTMTAIRHHTTVAEAGHLLFANGERHLRPLDALAEHYPDWLLAESVRIARRCTFDLKQLKYEYPHELVPKGQTPTSWLRELTERGARKRWPNGLTPATRAQVEKELALITEKKFDSYFLTVHDIVEFARSQHILCQGRGSAANSAVCYALGITELNPEKSNLLFERFISRERNEPPDIDVDFEHDRREEVIQYIFRRYGRGRAALTAVASTYHGSGAMRDVAKVLGLPPDQINALAEAFSRWSDSLPSPERLREYGFDADTPILKRVLALTGELIGFPRHLSQHPGGFVISEHPLETLVPVENAAMADRTIIQWDKDDLDLVGLLKVDILALGMLSALRRTFDLVHLHRGKRWTLADLPGDDRETYEMISRADTIGVFQIESRAQMAMLPRLRPEKFYDLVIEVAIVRPGPIQGDMVHPYLRRRNKEEAITYPPKLKSVFERTLGVPLFQEQVMEVAIIAAGYTPGEADELRRAMAAWKRHGGLEPHRERLRTGMLKNGYEADFADRIFEQIKGFGSYGFPESHAASFALLTYASCWLKCHEPAAFTCALINSWPMGFYSPDQLLQDARRHHIEIRPVDVRYSDWDCSLEPLDHPDSTRNLAIRLGLRMVRGFREDDARRIETARSKRLFSDATDLTLRAGLDARAAEALADSGALRGLIGHRHRARWEVAGVEAQRPLFNDLPSEDTQVTLPLPTVAEDLMADYATLGTTLGPHPLALLRRQLAAKRFRSSQDLLSLENDRTLSVAGLVIGRQRPGTASGVTFVTLEDEFGMVNVVVWRDLAERQRKVLVGSQLLQVFGRLESKSGVRHLIAQRLYDLTPLLTGLDVRSRDFQ</sequence>
<proteinExistence type="inferred from homology"/>
<dbReference type="EC" id="2.7.7.7" evidence="1"/>
<dbReference type="EMBL" id="CP000058">
    <property type="protein sequence ID" value="AAZ34765.1"/>
    <property type="molecule type" value="Genomic_DNA"/>
</dbReference>
<dbReference type="RefSeq" id="WP_004667591.1">
    <property type="nucleotide sequence ID" value="NC_005773.3"/>
</dbReference>
<dbReference type="SMR" id="Q48IB1"/>
<dbReference type="KEGG" id="psp:PSPPH_2680"/>
<dbReference type="eggNOG" id="COG0587">
    <property type="taxonomic scope" value="Bacteria"/>
</dbReference>
<dbReference type="HOGENOM" id="CLU_001600_4_0_6"/>
<dbReference type="Proteomes" id="UP000000551">
    <property type="component" value="Chromosome"/>
</dbReference>
<dbReference type="GO" id="GO:0005737">
    <property type="term" value="C:cytoplasm"/>
    <property type="evidence" value="ECO:0007669"/>
    <property type="project" value="UniProtKB-SubCell"/>
</dbReference>
<dbReference type="GO" id="GO:0008408">
    <property type="term" value="F:3'-5' exonuclease activity"/>
    <property type="evidence" value="ECO:0007669"/>
    <property type="project" value="InterPro"/>
</dbReference>
<dbReference type="GO" id="GO:0003887">
    <property type="term" value="F:DNA-directed DNA polymerase activity"/>
    <property type="evidence" value="ECO:0007669"/>
    <property type="project" value="UniProtKB-UniRule"/>
</dbReference>
<dbReference type="GO" id="GO:0003676">
    <property type="term" value="F:nucleic acid binding"/>
    <property type="evidence" value="ECO:0007669"/>
    <property type="project" value="InterPro"/>
</dbReference>
<dbReference type="GO" id="GO:0006281">
    <property type="term" value="P:DNA repair"/>
    <property type="evidence" value="ECO:0007669"/>
    <property type="project" value="UniProtKB-UniRule"/>
</dbReference>
<dbReference type="GO" id="GO:0006260">
    <property type="term" value="P:DNA replication"/>
    <property type="evidence" value="ECO:0007669"/>
    <property type="project" value="UniProtKB-KW"/>
</dbReference>
<dbReference type="CDD" id="cd04485">
    <property type="entry name" value="DnaE_OBF"/>
    <property type="match status" value="1"/>
</dbReference>
<dbReference type="CDD" id="cd07434">
    <property type="entry name" value="PHP_PolIIIA_DnaE2"/>
    <property type="match status" value="1"/>
</dbReference>
<dbReference type="FunFam" id="1.10.150.870:FF:000002">
    <property type="entry name" value="Error-prone DNA polymerase"/>
    <property type="match status" value="1"/>
</dbReference>
<dbReference type="Gene3D" id="1.10.150.870">
    <property type="match status" value="1"/>
</dbReference>
<dbReference type="Gene3D" id="3.20.20.140">
    <property type="entry name" value="Metal-dependent hydrolases"/>
    <property type="match status" value="1"/>
</dbReference>
<dbReference type="HAMAP" id="MF_01902">
    <property type="entry name" value="DNApol_error_prone"/>
    <property type="match status" value="1"/>
</dbReference>
<dbReference type="InterPro" id="IPR011708">
    <property type="entry name" value="DNA_pol3_alpha_NTPase_dom"/>
</dbReference>
<dbReference type="InterPro" id="IPR040982">
    <property type="entry name" value="DNA_pol3_finger"/>
</dbReference>
<dbReference type="InterPro" id="IPR023073">
    <property type="entry name" value="DnaE2"/>
</dbReference>
<dbReference type="InterPro" id="IPR004805">
    <property type="entry name" value="DnaE2/DnaE/PolC"/>
</dbReference>
<dbReference type="InterPro" id="IPR029460">
    <property type="entry name" value="DNAPol_HHH"/>
</dbReference>
<dbReference type="InterPro" id="IPR004365">
    <property type="entry name" value="NA-bd_OB_tRNA"/>
</dbReference>
<dbReference type="InterPro" id="IPR004013">
    <property type="entry name" value="PHP_dom"/>
</dbReference>
<dbReference type="InterPro" id="IPR003141">
    <property type="entry name" value="Pol/His_phosphatase_N"/>
</dbReference>
<dbReference type="InterPro" id="IPR016195">
    <property type="entry name" value="Pol/histidinol_Pase-like"/>
</dbReference>
<dbReference type="NCBIfam" id="TIGR00594">
    <property type="entry name" value="polc"/>
    <property type="match status" value="1"/>
</dbReference>
<dbReference type="NCBIfam" id="NF004225">
    <property type="entry name" value="PRK05672.1"/>
    <property type="match status" value="1"/>
</dbReference>
<dbReference type="PANTHER" id="PTHR32294">
    <property type="entry name" value="DNA POLYMERASE III SUBUNIT ALPHA"/>
    <property type="match status" value="1"/>
</dbReference>
<dbReference type="PANTHER" id="PTHR32294:SF4">
    <property type="entry name" value="ERROR-PRONE DNA POLYMERASE"/>
    <property type="match status" value="1"/>
</dbReference>
<dbReference type="Pfam" id="PF07733">
    <property type="entry name" value="DNA_pol3_alpha"/>
    <property type="match status" value="1"/>
</dbReference>
<dbReference type="Pfam" id="PF17657">
    <property type="entry name" value="DNA_pol3_finger"/>
    <property type="match status" value="1"/>
</dbReference>
<dbReference type="Pfam" id="PF14579">
    <property type="entry name" value="HHH_6"/>
    <property type="match status" value="1"/>
</dbReference>
<dbReference type="Pfam" id="PF02811">
    <property type="entry name" value="PHP"/>
    <property type="match status" value="1"/>
</dbReference>
<dbReference type="Pfam" id="PF01336">
    <property type="entry name" value="tRNA_anti-codon"/>
    <property type="match status" value="1"/>
</dbReference>
<dbReference type="SMART" id="SM00481">
    <property type="entry name" value="POLIIIAc"/>
    <property type="match status" value="1"/>
</dbReference>
<dbReference type="SUPFAM" id="SSF89550">
    <property type="entry name" value="PHP domain-like"/>
    <property type="match status" value="1"/>
</dbReference>
<gene>
    <name evidence="1" type="primary">dnaE2</name>
    <name type="ordered locus">PSPPH_2680</name>
</gene>
<protein>
    <recommendedName>
        <fullName evidence="1">Error-prone DNA polymerase</fullName>
        <ecNumber evidence="1">2.7.7.7</ecNumber>
    </recommendedName>
</protein>
<comment type="function">
    <text evidence="1">DNA polymerase involved in damage-induced mutagenesis and translesion synthesis (TLS). It is not the major replicative DNA polymerase.</text>
</comment>
<comment type="catalytic activity">
    <reaction evidence="1">
        <text>DNA(n) + a 2'-deoxyribonucleoside 5'-triphosphate = DNA(n+1) + diphosphate</text>
        <dbReference type="Rhea" id="RHEA:22508"/>
        <dbReference type="Rhea" id="RHEA-COMP:17339"/>
        <dbReference type="Rhea" id="RHEA-COMP:17340"/>
        <dbReference type="ChEBI" id="CHEBI:33019"/>
        <dbReference type="ChEBI" id="CHEBI:61560"/>
        <dbReference type="ChEBI" id="CHEBI:173112"/>
        <dbReference type="EC" id="2.7.7.7"/>
    </reaction>
</comment>
<comment type="subcellular location">
    <subcellularLocation>
        <location evidence="1">Cytoplasm</location>
    </subcellularLocation>
</comment>
<comment type="similarity">
    <text evidence="1">Belongs to the DNA polymerase type-C family. DnaE2 subfamily.</text>
</comment>
<keyword id="KW-0963">Cytoplasm</keyword>
<keyword id="KW-0227">DNA damage</keyword>
<keyword id="KW-0234">DNA repair</keyword>
<keyword id="KW-0235">DNA replication</keyword>
<keyword id="KW-0239">DNA-directed DNA polymerase</keyword>
<keyword id="KW-0548">Nucleotidyltransferase</keyword>
<keyword id="KW-0808">Transferase</keyword>
<evidence type="ECO:0000255" key="1">
    <source>
        <dbReference type="HAMAP-Rule" id="MF_01902"/>
    </source>
</evidence>
<accession>Q48IB1</accession>
<name>DNAE2_PSE14</name>
<organism>
    <name type="scientific">Pseudomonas savastanoi pv. phaseolicola (strain 1448A / Race 6)</name>
    <name type="common">Pseudomonas syringae pv. phaseolicola (strain 1448A / Race 6)</name>
    <dbReference type="NCBI Taxonomy" id="264730"/>
    <lineage>
        <taxon>Bacteria</taxon>
        <taxon>Pseudomonadati</taxon>
        <taxon>Pseudomonadota</taxon>
        <taxon>Gammaproteobacteria</taxon>
        <taxon>Pseudomonadales</taxon>
        <taxon>Pseudomonadaceae</taxon>
        <taxon>Pseudomonas</taxon>
    </lineage>
</organism>
<feature type="chain" id="PRO_1000070591" description="Error-prone DNA polymerase">
    <location>
        <begin position="1"/>
        <end position="1031"/>
    </location>
</feature>